<reference key="1">
    <citation type="journal article" date="2002" name="Proc. Natl. Acad. Sci. U.S.A.">
        <title>The complete genome sequence of Chlorobium tepidum TLS, a photosynthetic, anaerobic, green-sulfur bacterium.</title>
        <authorList>
            <person name="Eisen J.A."/>
            <person name="Nelson K.E."/>
            <person name="Paulsen I.T."/>
            <person name="Heidelberg J.F."/>
            <person name="Wu M."/>
            <person name="Dodson R.J."/>
            <person name="DeBoy R.T."/>
            <person name="Gwinn M.L."/>
            <person name="Nelson W.C."/>
            <person name="Haft D.H."/>
            <person name="Hickey E.K."/>
            <person name="Peterson J.D."/>
            <person name="Durkin A.S."/>
            <person name="Kolonay J.F."/>
            <person name="Yang F."/>
            <person name="Holt I.E."/>
            <person name="Umayam L.A."/>
            <person name="Mason T.M."/>
            <person name="Brenner M."/>
            <person name="Shea T.P."/>
            <person name="Parksey D.S."/>
            <person name="Nierman W.C."/>
            <person name="Feldblyum T.V."/>
            <person name="Hansen C.L."/>
            <person name="Craven M.B."/>
            <person name="Radune D."/>
            <person name="Vamathevan J.J."/>
            <person name="Khouri H.M."/>
            <person name="White O."/>
            <person name="Gruber T.M."/>
            <person name="Ketchum K.A."/>
            <person name="Venter J.C."/>
            <person name="Tettelin H."/>
            <person name="Bryant D.A."/>
            <person name="Fraser C.M."/>
        </authorList>
    </citation>
    <scope>NUCLEOTIDE SEQUENCE [LARGE SCALE GENOMIC DNA]</scope>
    <source>
        <strain>ATCC 49652 / DSM 12025 / NBRC 103806 / TLS</strain>
    </source>
</reference>
<dbReference type="EC" id="2.7.6.1" evidence="1"/>
<dbReference type="EMBL" id="AE006470">
    <property type="protein sequence ID" value="AAM72590.1"/>
    <property type="molecule type" value="Genomic_DNA"/>
</dbReference>
<dbReference type="RefSeq" id="NP_662248.1">
    <property type="nucleotide sequence ID" value="NC_002932.3"/>
</dbReference>
<dbReference type="RefSeq" id="WP_010933029.1">
    <property type="nucleotide sequence ID" value="NC_002932.3"/>
</dbReference>
<dbReference type="SMR" id="Q8KCQ2"/>
<dbReference type="STRING" id="194439.CT1361"/>
<dbReference type="EnsemblBacteria" id="AAM72590">
    <property type="protein sequence ID" value="AAM72590"/>
    <property type="gene ID" value="CT1361"/>
</dbReference>
<dbReference type="KEGG" id="cte:CT1361"/>
<dbReference type="PATRIC" id="fig|194439.7.peg.1239"/>
<dbReference type="eggNOG" id="COG0462">
    <property type="taxonomic scope" value="Bacteria"/>
</dbReference>
<dbReference type="HOGENOM" id="CLU_033546_4_0_10"/>
<dbReference type="OrthoDB" id="9777067at2"/>
<dbReference type="UniPathway" id="UPA00087">
    <property type="reaction ID" value="UER00172"/>
</dbReference>
<dbReference type="Proteomes" id="UP000001007">
    <property type="component" value="Chromosome"/>
</dbReference>
<dbReference type="GO" id="GO:0005737">
    <property type="term" value="C:cytoplasm"/>
    <property type="evidence" value="ECO:0007669"/>
    <property type="project" value="UniProtKB-SubCell"/>
</dbReference>
<dbReference type="GO" id="GO:0002189">
    <property type="term" value="C:ribose phosphate diphosphokinase complex"/>
    <property type="evidence" value="ECO:0007669"/>
    <property type="project" value="TreeGrafter"/>
</dbReference>
<dbReference type="GO" id="GO:0005524">
    <property type="term" value="F:ATP binding"/>
    <property type="evidence" value="ECO:0007669"/>
    <property type="project" value="UniProtKB-KW"/>
</dbReference>
<dbReference type="GO" id="GO:0016301">
    <property type="term" value="F:kinase activity"/>
    <property type="evidence" value="ECO:0007669"/>
    <property type="project" value="UniProtKB-KW"/>
</dbReference>
<dbReference type="GO" id="GO:0000287">
    <property type="term" value="F:magnesium ion binding"/>
    <property type="evidence" value="ECO:0007669"/>
    <property type="project" value="UniProtKB-UniRule"/>
</dbReference>
<dbReference type="GO" id="GO:0004749">
    <property type="term" value="F:ribose phosphate diphosphokinase activity"/>
    <property type="evidence" value="ECO:0007669"/>
    <property type="project" value="UniProtKB-UniRule"/>
</dbReference>
<dbReference type="GO" id="GO:0006015">
    <property type="term" value="P:5-phosphoribose 1-diphosphate biosynthetic process"/>
    <property type="evidence" value="ECO:0007669"/>
    <property type="project" value="UniProtKB-UniRule"/>
</dbReference>
<dbReference type="GO" id="GO:0006164">
    <property type="term" value="P:purine nucleotide biosynthetic process"/>
    <property type="evidence" value="ECO:0007669"/>
    <property type="project" value="TreeGrafter"/>
</dbReference>
<dbReference type="GO" id="GO:0009156">
    <property type="term" value="P:ribonucleoside monophosphate biosynthetic process"/>
    <property type="evidence" value="ECO:0007669"/>
    <property type="project" value="InterPro"/>
</dbReference>
<dbReference type="CDD" id="cd06223">
    <property type="entry name" value="PRTases_typeI"/>
    <property type="match status" value="1"/>
</dbReference>
<dbReference type="FunFam" id="3.40.50.2020:FF:000007">
    <property type="entry name" value="Ribose-phosphate pyrophosphokinase"/>
    <property type="match status" value="1"/>
</dbReference>
<dbReference type="Gene3D" id="3.40.50.2020">
    <property type="match status" value="2"/>
</dbReference>
<dbReference type="HAMAP" id="MF_00583_B">
    <property type="entry name" value="RibP_PPkinase_B"/>
    <property type="match status" value="1"/>
</dbReference>
<dbReference type="InterPro" id="IPR000842">
    <property type="entry name" value="PRib_PP_synth_CS"/>
</dbReference>
<dbReference type="InterPro" id="IPR029099">
    <property type="entry name" value="Pribosyltran_N"/>
</dbReference>
<dbReference type="InterPro" id="IPR000836">
    <property type="entry name" value="PRibTrfase_dom"/>
</dbReference>
<dbReference type="InterPro" id="IPR029057">
    <property type="entry name" value="PRTase-like"/>
</dbReference>
<dbReference type="InterPro" id="IPR005946">
    <property type="entry name" value="Rib-P_diPkinase"/>
</dbReference>
<dbReference type="InterPro" id="IPR037515">
    <property type="entry name" value="Rib-P_diPkinase_bac"/>
</dbReference>
<dbReference type="NCBIfam" id="NF002320">
    <property type="entry name" value="PRK01259.1"/>
    <property type="match status" value="1"/>
</dbReference>
<dbReference type="NCBIfam" id="TIGR01251">
    <property type="entry name" value="ribP_PPkin"/>
    <property type="match status" value="1"/>
</dbReference>
<dbReference type="PANTHER" id="PTHR10210">
    <property type="entry name" value="RIBOSE-PHOSPHATE DIPHOSPHOKINASE FAMILY MEMBER"/>
    <property type="match status" value="1"/>
</dbReference>
<dbReference type="PANTHER" id="PTHR10210:SF41">
    <property type="entry name" value="RIBOSE-PHOSPHATE PYROPHOSPHOKINASE 1, CHLOROPLASTIC"/>
    <property type="match status" value="1"/>
</dbReference>
<dbReference type="Pfam" id="PF14572">
    <property type="entry name" value="Pribosyl_synth"/>
    <property type="match status" value="1"/>
</dbReference>
<dbReference type="Pfam" id="PF13793">
    <property type="entry name" value="Pribosyltran_N"/>
    <property type="match status" value="1"/>
</dbReference>
<dbReference type="SMART" id="SM01400">
    <property type="entry name" value="Pribosyltran_N"/>
    <property type="match status" value="1"/>
</dbReference>
<dbReference type="SUPFAM" id="SSF53271">
    <property type="entry name" value="PRTase-like"/>
    <property type="match status" value="1"/>
</dbReference>
<dbReference type="PROSITE" id="PS00114">
    <property type="entry name" value="PRPP_SYNTHASE"/>
    <property type="match status" value="1"/>
</dbReference>
<proteinExistence type="inferred from homology"/>
<organism>
    <name type="scientific">Chlorobaculum tepidum (strain ATCC 49652 / DSM 12025 / NBRC 103806 / TLS)</name>
    <name type="common">Chlorobium tepidum</name>
    <dbReference type="NCBI Taxonomy" id="194439"/>
    <lineage>
        <taxon>Bacteria</taxon>
        <taxon>Pseudomonadati</taxon>
        <taxon>Chlorobiota</taxon>
        <taxon>Chlorobiia</taxon>
        <taxon>Chlorobiales</taxon>
        <taxon>Chlorobiaceae</taxon>
        <taxon>Chlorobaculum</taxon>
    </lineage>
</organism>
<protein>
    <recommendedName>
        <fullName evidence="1">Ribose-phosphate pyrophosphokinase</fullName>
        <shortName evidence="1">RPPK</shortName>
        <ecNumber evidence="1">2.7.6.1</ecNumber>
    </recommendedName>
    <alternativeName>
        <fullName evidence="1">5-phospho-D-ribosyl alpha-1-diphosphate synthase</fullName>
    </alternativeName>
    <alternativeName>
        <fullName evidence="1">Phosphoribosyl diphosphate synthase</fullName>
    </alternativeName>
    <alternativeName>
        <fullName evidence="1">Phosphoribosyl pyrophosphate synthase</fullName>
        <shortName evidence="1">P-Rib-PP synthase</shortName>
        <shortName evidence="1">PRPP synthase</shortName>
        <shortName evidence="1">PRPPase</shortName>
    </alternativeName>
</protein>
<name>KPRS_CHLTE</name>
<keyword id="KW-0067">ATP-binding</keyword>
<keyword id="KW-0963">Cytoplasm</keyword>
<keyword id="KW-0418">Kinase</keyword>
<keyword id="KW-0460">Magnesium</keyword>
<keyword id="KW-0479">Metal-binding</keyword>
<keyword id="KW-0545">Nucleotide biosynthesis</keyword>
<keyword id="KW-0547">Nucleotide-binding</keyword>
<keyword id="KW-1185">Reference proteome</keyword>
<keyword id="KW-0808">Transferase</keyword>
<sequence length="323" mass="35266">METPIKIVAGRSNPELAKKIAAYLGTPLCDAKAENFSDGEISVNYFESIRGSDMFIIQSTNPPADNLMELLIMIDAAKRSSAYRITAVLPYYGYARQDRKDKPRVAITAKLVANLLTQAGADRILTMDLHAPQIQGFFDIPFDHLYSSVVLIDHVKNMDIADNLVVASPDVGGVKLARKFASELGTELVIVDKRRPKANVAEVMNIIGDVKGKNVLLVDDMIDTAGTIVNAAKAIKEAGGLKIYAAATHPILSGPAIERINTSVFEKVIVTDSLVSEHDFCSKIETVTISNLFGEAIKRIYDGESVSYLFDSKNISQKITNHH</sequence>
<comment type="function">
    <text evidence="1">Involved in the biosynthesis of the central metabolite phospho-alpha-D-ribosyl-1-pyrophosphate (PRPP) via the transfer of pyrophosphoryl group from ATP to 1-hydroxyl of ribose-5-phosphate (Rib-5-P).</text>
</comment>
<comment type="catalytic activity">
    <reaction evidence="1">
        <text>D-ribose 5-phosphate + ATP = 5-phospho-alpha-D-ribose 1-diphosphate + AMP + H(+)</text>
        <dbReference type="Rhea" id="RHEA:15609"/>
        <dbReference type="ChEBI" id="CHEBI:15378"/>
        <dbReference type="ChEBI" id="CHEBI:30616"/>
        <dbReference type="ChEBI" id="CHEBI:58017"/>
        <dbReference type="ChEBI" id="CHEBI:78346"/>
        <dbReference type="ChEBI" id="CHEBI:456215"/>
        <dbReference type="EC" id="2.7.6.1"/>
    </reaction>
</comment>
<comment type="cofactor">
    <cofactor evidence="1">
        <name>Mg(2+)</name>
        <dbReference type="ChEBI" id="CHEBI:18420"/>
    </cofactor>
    <text evidence="1">Binds 2 Mg(2+) ions per subunit.</text>
</comment>
<comment type="pathway">
    <text evidence="1">Metabolic intermediate biosynthesis; 5-phospho-alpha-D-ribose 1-diphosphate biosynthesis; 5-phospho-alpha-D-ribose 1-diphosphate from D-ribose 5-phosphate (route I): step 1/1.</text>
</comment>
<comment type="subunit">
    <text evidence="1">Homohexamer.</text>
</comment>
<comment type="subcellular location">
    <subcellularLocation>
        <location evidence="1">Cytoplasm</location>
    </subcellularLocation>
</comment>
<comment type="similarity">
    <text evidence="1">Belongs to the ribose-phosphate pyrophosphokinase family. Class I subfamily.</text>
</comment>
<accession>Q8KCQ2</accession>
<evidence type="ECO:0000255" key="1">
    <source>
        <dbReference type="HAMAP-Rule" id="MF_00583"/>
    </source>
</evidence>
<feature type="chain" id="PRO_0000141124" description="Ribose-phosphate pyrophosphokinase">
    <location>
        <begin position="1"/>
        <end position="323"/>
    </location>
</feature>
<feature type="active site" evidence="1">
    <location>
        <position position="193"/>
    </location>
</feature>
<feature type="binding site" evidence="1">
    <location>
        <begin position="38"/>
        <end position="40"/>
    </location>
    <ligand>
        <name>ATP</name>
        <dbReference type="ChEBI" id="CHEBI:30616"/>
    </ligand>
</feature>
<feature type="binding site" evidence="1">
    <location>
        <begin position="96"/>
        <end position="97"/>
    </location>
    <ligand>
        <name>ATP</name>
        <dbReference type="ChEBI" id="CHEBI:30616"/>
    </ligand>
</feature>
<feature type="binding site" evidence="1">
    <location>
        <position position="130"/>
    </location>
    <ligand>
        <name>Mg(2+)</name>
        <dbReference type="ChEBI" id="CHEBI:18420"/>
        <label>1</label>
    </ligand>
</feature>
<feature type="binding site" evidence="1">
    <location>
        <position position="170"/>
    </location>
    <ligand>
        <name>Mg(2+)</name>
        <dbReference type="ChEBI" id="CHEBI:18420"/>
        <label>2</label>
    </ligand>
</feature>
<feature type="binding site" evidence="1">
    <location>
        <position position="195"/>
    </location>
    <ligand>
        <name>D-ribose 5-phosphate</name>
        <dbReference type="ChEBI" id="CHEBI:78346"/>
    </ligand>
</feature>
<feature type="binding site" evidence="1">
    <location>
        <position position="219"/>
    </location>
    <ligand>
        <name>D-ribose 5-phosphate</name>
        <dbReference type="ChEBI" id="CHEBI:78346"/>
    </ligand>
</feature>
<feature type="binding site" evidence="1">
    <location>
        <begin position="223"/>
        <end position="227"/>
    </location>
    <ligand>
        <name>D-ribose 5-phosphate</name>
        <dbReference type="ChEBI" id="CHEBI:78346"/>
    </ligand>
</feature>
<gene>
    <name evidence="1" type="primary">prs</name>
    <name type="synonym">prsA</name>
    <name type="ordered locus">CT1361</name>
</gene>